<dbReference type="EC" id="2.7.7.6" evidence="1"/>
<dbReference type="EMBL" id="AL157959">
    <property type="protein sequence ID" value="CAM07460.1"/>
    <property type="molecule type" value="Genomic_DNA"/>
</dbReference>
<dbReference type="PIR" id="D82007">
    <property type="entry name" value="D82007"/>
</dbReference>
<dbReference type="RefSeq" id="WP_002236600.1">
    <property type="nucleotide sequence ID" value="NC_003116.1"/>
</dbReference>
<dbReference type="SMR" id="P57009"/>
<dbReference type="EnsemblBacteria" id="CAM07460">
    <property type="protein sequence ID" value="CAM07460"/>
    <property type="gene ID" value="NMA0142"/>
</dbReference>
<dbReference type="KEGG" id="nma:NMA0142"/>
<dbReference type="HOGENOM" id="CLU_000524_4_3_4"/>
<dbReference type="Proteomes" id="UP000000626">
    <property type="component" value="Chromosome"/>
</dbReference>
<dbReference type="GO" id="GO:0000428">
    <property type="term" value="C:DNA-directed RNA polymerase complex"/>
    <property type="evidence" value="ECO:0007669"/>
    <property type="project" value="UniProtKB-KW"/>
</dbReference>
<dbReference type="GO" id="GO:0003677">
    <property type="term" value="F:DNA binding"/>
    <property type="evidence" value="ECO:0007669"/>
    <property type="project" value="UniProtKB-UniRule"/>
</dbReference>
<dbReference type="GO" id="GO:0003899">
    <property type="term" value="F:DNA-directed RNA polymerase activity"/>
    <property type="evidence" value="ECO:0007669"/>
    <property type="project" value="UniProtKB-UniRule"/>
</dbReference>
<dbReference type="GO" id="GO:0032549">
    <property type="term" value="F:ribonucleoside binding"/>
    <property type="evidence" value="ECO:0007669"/>
    <property type="project" value="InterPro"/>
</dbReference>
<dbReference type="GO" id="GO:0006351">
    <property type="term" value="P:DNA-templated transcription"/>
    <property type="evidence" value="ECO:0007669"/>
    <property type="project" value="UniProtKB-UniRule"/>
</dbReference>
<dbReference type="CDD" id="cd00653">
    <property type="entry name" value="RNA_pol_B_RPB2"/>
    <property type="match status" value="1"/>
</dbReference>
<dbReference type="FunFam" id="2.30.150.10:FF:000001">
    <property type="entry name" value="DNA-directed RNA polymerase subunit beta"/>
    <property type="match status" value="1"/>
</dbReference>
<dbReference type="FunFam" id="2.40.50.100:FF:000006">
    <property type="entry name" value="DNA-directed RNA polymerase subunit beta"/>
    <property type="match status" value="1"/>
</dbReference>
<dbReference type="FunFam" id="2.40.50.150:FF:000001">
    <property type="entry name" value="DNA-directed RNA polymerase subunit beta"/>
    <property type="match status" value="1"/>
</dbReference>
<dbReference type="FunFam" id="3.90.1110.10:FF:000001">
    <property type="entry name" value="DNA-directed RNA polymerase subunit beta"/>
    <property type="match status" value="1"/>
</dbReference>
<dbReference type="FunFam" id="3.90.1110.10:FF:000004">
    <property type="entry name" value="DNA-directed RNA polymerase subunit beta"/>
    <property type="match status" value="1"/>
</dbReference>
<dbReference type="FunFam" id="3.90.1800.10:FF:000001">
    <property type="entry name" value="DNA-directed RNA polymerase subunit beta"/>
    <property type="match status" value="1"/>
</dbReference>
<dbReference type="Gene3D" id="2.40.50.100">
    <property type="match status" value="1"/>
</dbReference>
<dbReference type="Gene3D" id="2.40.50.150">
    <property type="match status" value="1"/>
</dbReference>
<dbReference type="Gene3D" id="3.90.1100.10">
    <property type="match status" value="2"/>
</dbReference>
<dbReference type="Gene3D" id="2.30.150.10">
    <property type="entry name" value="DNA-directed RNA polymerase, beta subunit, external 1 domain"/>
    <property type="match status" value="1"/>
</dbReference>
<dbReference type="Gene3D" id="2.40.270.10">
    <property type="entry name" value="DNA-directed RNA polymerase, subunit 2, domain 6"/>
    <property type="match status" value="1"/>
</dbReference>
<dbReference type="Gene3D" id="3.90.1800.10">
    <property type="entry name" value="RNA polymerase alpha subunit dimerisation domain"/>
    <property type="match status" value="1"/>
</dbReference>
<dbReference type="Gene3D" id="3.90.1110.10">
    <property type="entry name" value="RNA polymerase Rpb2, domain 2"/>
    <property type="match status" value="1"/>
</dbReference>
<dbReference type="HAMAP" id="MF_01321">
    <property type="entry name" value="RNApol_bact_RpoB"/>
    <property type="match status" value="1"/>
</dbReference>
<dbReference type="InterPro" id="IPR042107">
    <property type="entry name" value="DNA-dir_RNA_pol_bsu_ext_1_sf"/>
</dbReference>
<dbReference type="InterPro" id="IPR019462">
    <property type="entry name" value="DNA-dir_RNA_pol_bsu_external_1"/>
</dbReference>
<dbReference type="InterPro" id="IPR015712">
    <property type="entry name" value="DNA-dir_RNA_pol_su2"/>
</dbReference>
<dbReference type="InterPro" id="IPR007120">
    <property type="entry name" value="DNA-dir_RNAP_su2_dom"/>
</dbReference>
<dbReference type="InterPro" id="IPR037033">
    <property type="entry name" value="DNA-dir_RNAP_su2_hyb_sf"/>
</dbReference>
<dbReference type="InterPro" id="IPR010243">
    <property type="entry name" value="RNA_pol_bsu_bac"/>
</dbReference>
<dbReference type="InterPro" id="IPR007121">
    <property type="entry name" value="RNA_pol_bsu_CS"/>
</dbReference>
<dbReference type="InterPro" id="IPR007644">
    <property type="entry name" value="RNA_pol_bsu_protrusion"/>
</dbReference>
<dbReference type="InterPro" id="IPR007642">
    <property type="entry name" value="RNA_pol_Rpb2_2"/>
</dbReference>
<dbReference type="InterPro" id="IPR037034">
    <property type="entry name" value="RNA_pol_Rpb2_2_sf"/>
</dbReference>
<dbReference type="InterPro" id="IPR007645">
    <property type="entry name" value="RNA_pol_Rpb2_3"/>
</dbReference>
<dbReference type="InterPro" id="IPR007641">
    <property type="entry name" value="RNA_pol_Rpb2_7"/>
</dbReference>
<dbReference type="InterPro" id="IPR014724">
    <property type="entry name" value="RNA_pol_RPB2_OB-fold"/>
</dbReference>
<dbReference type="NCBIfam" id="NF001616">
    <property type="entry name" value="PRK00405.1"/>
    <property type="match status" value="1"/>
</dbReference>
<dbReference type="NCBIfam" id="TIGR02013">
    <property type="entry name" value="rpoB"/>
    <property type="match status" value="1"/>
</dbReference>
<dbReference type="PANTHER" id="PTHR20856">
    <property type="entry name" value="DNA-DIRECTED RNA POLYMERASE I SUBUNIT 2"/>
    <property type="match status" value="1"/>
</dbReference>
<dbReference type="Pfam" id="PF04563">
    <property type="entry name" value="RNA_pol_Rpb2_1"/>
    <property type="match status" value="1"/>
</dbReference>
<dbReference type="Pfam" id="PF04561">
    <property type="entry name" value="RNA_pol_Rpb2_2"/>
    <property type="match status" value="2"/>
</dbReference>
<dbReference type="Pfam" id="PF04565">
    <property type="entry name" value="RNA_pol_Rpb2_3"/>
    <property type="match status" value="1"/>
</dbReference>
<dbReference type="Pfam" id="PF10385">
    <property type="entry name" value="RNA_pol_Rpb2_45"/>
    <property type="match status" value="1"/>
</dbReference>
<dbReference type="Pfam" id="PF00562">
    <property type="entry name" value="RNA_pol_Rpb2_6"/>
    <property type="match status" value="1"/>
</dbReference>
<dbReference type="Pfam" id="PF04560">
    <property type="entry name" value="RNA_pol_Rpb2_7"/>
    <property type="match status" value="1"/>
</dbReference>
<dbReference type="SUPFAM" id="SSF64484">
    <property type="entry name" value="beta and beta-prime subunits of DNA dependent RNA-polymerase"/>
    <property type="match status" value="1"/>
</dbReference>
<dbReference type="PROSITE" id="PS01166">
    <property type="entry name" value="RNA_POL_BETA"/>
    <property type="match status" value="1"/>
</dbReference>
<gene>
    <name evidence="1" type="primary">rpoB</name>
    <name type="ordered locus">NMA0142</name>
</gene>
<sequence>MSYSFTEKKRIRKSFAKRENVLEVPFLLATQIDSYAKFLQLENAFDKRTDDGLQAAFNSIFPIVSHNGYARLEFVHYTLGEPLFDIPECQLRGITYAAPLRARIRLVILDKEASKPTVKEVRENEVYMGEIPLMTPSGSFVINGTERVIVSQLHRSPGVFFEHDKGKTHSSGKLLFSARIIPYRGSWLDFEFDPKDLLYFRIDRRRKMPVTILLKALGYNNEQILDIFYDKETFYLSSNGVQTDLVAGRLKGETAKVDILDKEGNVLVAKGKRITAKNIRDITNAGLTRLDVEPESLLGKALAADLIDSETGEVLASANDEITEELLAKFDINGVKEITTLYINELDQGAYISNTLRTDETAGRQAARVAIYRMMRPGEPPTEEAVEQLFNRLFFSEDSYDLSRVGRMKFNTRTYEQKLSEAQQNSWYGRLLNETFAGAADKGGYVLSVEDIVASIATLVELRNGHGEVDDIDHLGNRRVRSVGELTENQFRSGLARVERAVKERLNQAESENLMPHDLINAKPVSAAIKEFFGSSQLSQFMDQTNPLSEVTHKRRVSALGPGGLTRERAGFEVRDVHPTHYGRVCPIETPEGPNIGLINSLSVYARTNDYGFLETPYRRVIDGKVTEEIDYLSAIEEGRYVIAQANADLDSDGNLIGDLVTCREKGETIMATPDRVQYMDVATGQVVSVAASLIPFLEHDDANRALMGANMQRQAVPCLRPEKPMVGTGIERSVAVDSATAIVARRGGVVEYVDANRVVVRVHDDEATAGEVGVDIYNLVKFTRSNQSTNINQRPAVKAGDVLQRGDLVADGASTDLGELALGQNMTIAFMPWNGYNYEDSILISEKVAADDRYTSIHIEELNVVARDTKLGAEDITRDIPNLSERMQNRLDESGIVYIGAEVEAGDVLVGKVTPKGETQLTPEEKLLRAIFGEKASDVKDTSLRMPTGMSGTVIDVQVFTREGIQRDKRAQSIIDSELKRYRLDLNDQLRIFDNDAFDRIERMIVGQKANGGPMKLAKGSEITTEYLAGLPSRHDWFDIRLTDEDLAKQLELIKVSLQQKREEADELYEIKKKKLTQGDELQPGVQKMVKVFIAIKRRLQAGDKMAGRHGNKGVVSRILPVEDMPYMADGRPVDIVLNPLGVPSRMNIGQILEVHLGWAAKGIGERIDRMLKEQRKAGELREFLNRLYNGSGKKEDLDALTDEEIIELASNLRKGASFASPVFDGAKESEIREMLNLAYPSDDPEVEKLGFNDSKTQITLYDGRSGEAFDRKVTVGVMHYLKLHHLVDEKMHARSTGPYSLVTQQPLGGKAQFGGQRFGEMEVWALEAYGAAYTLQEMLTVKSDDVNGRTKMYENIVKGEHKIDAGMPESFNVLVKEIRSLGLDIDLERY</sequence>
<comment type="function">
    <text evidence="1">DNA-dependent RNA polymerase catalyzes the transcription of DNA into RNA using the four ribonucleoside triphosphates as substrates.</text>
</comment>
<comment type="catalytic activity">
    <reaction evidence="1">
        <text>RNA(n) + a ribonucleoside 5'-triphosphate = RNA(n+1) + diphosphate</text>
        <dbReference type="Rhea" id="RHEA:21248"/>
        <dbReference type="Rhea" id="RHEA-COMP:14527"/>
        <dbReference type="Rhea" id="RHEA-COMP:17342"/>
        <dbReference type="ChEBI" id="CHEBI:33019"/>
        <dbReference type="ChEBI" id="CHEBI:61557"/>
        <dbReference type="ChEBI" id="CHEBI:140395"/>
        <dbReference type="EC" id="2.7.7.6"/>
    </reaction>
</comment>
<comment type="subunit">
    <text evidence="1">The RNAP catalytic core consists of 2 alpha, 1 beta, 1 beta' and 1 omega subunit. When a sigma factor is associated with the core the holoenzyme is formed, which can initiate transcription.</text>
</comment>
<comment type="similarity">
    <text evidence="1">Belongs to the RNA polymerase beta chain family.</text>
</comment>
<organism>
    <name type="scientific">Neisseria meningitidis serogroup A / serotype 4A (strain DSM 15465 / Z2491)</name>
    <dbReference type="NCBI Taxonomy" id="122587"/>
    <lineage>
        <taxon>Bacteria</taxon>
        <taxon>Pseudomonadati</taxon>
        <taxon>Pseudomonadota</taxon>
        <taxon>Betaproteobacteria</taxon>
        <taxon>Neisseriales</taxon>
        <taxon>Neisseriaceae</taxon>
        <taxon>Neisseria</taxon>
    </lineage>
</organism>
<accession>P57009</accession>
<accession>A1IP03</accession>
<proteinExistence type="inferred from homology"/>
<keyword id="KW-0240">DNA-directed RNA polymerase</keyword>
<keyword id="KW-0548">Nucleotidyltransferase</keyword>
<keyword id="KW-0804">Transcription</keyword>
<keyword id="KW-0808">Transferase</keyword>
<reference key="1">
    <citation type="journal article" date="2000" name="Nature">
        <title>Complete DNA sequence of a serogroup A strain of Neisseria meningitidis Z2491.</title>
        <authorList>
            <person name="Parkhill J."/>
            <person name="Achtman M."/>
            <person name="James K.D."/>
            <person name="Bentley S.D."/>
            <person name="Churcher C.M."/>
            <person name="Klee S.R."/>
            <person name="Morelli G."/>
            <person name="Basham D."/>
            <person name="Brown D."/>
            <person name="Chillingworth T."/>
            <person name="Davies R.M."/>
            <person name="Davis P."/>
            <person name="Devlin K."/>
            <person name="Feltwell T."/>
            <person name="Hamlin N."/>
            <person name="Holroyd S."/>
            <person name="Jagels K."/>
            <person name="Leather S."/>
            <person name="Moule S."/>
            <person name="Mungall K.L."/>
            <person name="Quail M.A."/>
            <person name="Rajandream M.A."/>
            <person name="Rutherford K.M."/>
            <person name="Simmonds M."/>
            <person name="Skelton J."/>
            <person name="Whitehead S."/>
            <person name="Spratt B.G."/>
            <person name="Barrell B.G."/>
        </authorList>
    </citation>
    <scope>NUCLEOTIDE SEQUENCE [LARGE SCALE GENOMIC DNA]</scope>
    <source>
        <strain>DSM 15465 / Z2491</strain>
    </source>
</reference>
<name>RPOB_NEIMA</name>
<protein>
    <recommendedName>
        <fullName evidence="1">DNA-directed RNA polymerase subunit beta</fullName>
        <shortName evidence="1">RNAP subunit beta</shortName>
        <ecNumber evidence="1">2.7.7.6</ecNumber>
    </recommendedName>
    <alternativeName>
        <fullName evidence="1">RNA polymerase subunit beta</fullName>
    </alternativeName>
    <alternativeName>
        <fullName evidence="1">Transcriptase subunit beta</fullName>
    </alternativeName>
</protein>
<evidence type="ECO:0000255" key="1">
    <source>
        <dbReference type="HAMAP-Rule" id="MF_01321"/>
    </source>
</evidence>
<feature type="chain" id="PRO_0000047929" description="DNA-directed RNA polymerase subunit beta">
    <location>
        <begin position="1"/>
        <end position="1392"/>
    </location>
</feature>